<sequence>MTKSELVAQLASRFPQLVLKDADFAVKTMLDAMSDALSKGHRIEIRGFGSFGLNRRPARVGRNPKSGEKVQVPEKHVPHFKPGKELRERVDGRAGEPLKNDEPEDAQ</sequence>
<organism>
    <name type="scientific">Burkholderia pseudomallei (strain K96243)</name>
    <dbReference type="NCBI Taxonomy" id="272560"/>
    <lineage>
        <taxon>Bacteria</taxon>
        <taxon>Pseudomonadati</taxon>
        <taxon>Pseudomonadota</taxon>
        <taxon>Betaproteobacteria</taxon>
        <taxon>Burkholderiales</taxon>
        <taxon>Burkholderiaceae</taxon>
        <taxon>Burkholderia</taxon>
        <taxon>pseudomallei group</taxon>
    </lineage>
</organism>
<evidence type="ECO:0000255" key="1">
    <source>
        <dbReference type="HAMAP-Rule" id="MF_00381"/>
    </source>
</evidence>
<evidence type="ECO:0000256" key="2">
    <source>
        <dbReference type="SAM" id="MobiDB-lite"/>
    </source>
</evidence>
<protein>
    <recommendedName>
        <fullName evidence="1">Integration host factor subunit beta</fullName>
        <shortName evidence="1">IHF-beta</shortName>
    </recommendedName>
</protein>
<keyword id="KW-0233">DNA recombination</keyword>
<keyword id="KW-0238">DNA-binding</keyword>
<keyword id="KW-1185">Reference proteome</keyword>
<keyword id="KW-0804">Transcription</keyword>
<keyword id="KW-0805">Transcription regulation</keyword>
<keyword id="KW-0810">Translation regulation</keyword>
<dbReference type="EMBL" id="BX571965">
    <property type="protein sequence ID" value="CAH36521.1"/>
    <property type="molecule type" value="Genomic_DNA"/>
</dbReference>
<dbReference type="RefSeq" id="WP_004189865.1">
    <property type="nucleotide sequence ID" value="NZ_CP009538.1"/>
</dbReference>
<dbReference type="RefSeq" id="YP_109110.1">
    <property type="nucleotide sequence ID" value="NC_006350.1"/>
</dbReference>
<dbReference type="SMR" id="Q63S07"/>
<dbReference type="STRING" id="272560.BPSL2514"/>
<dbReference type="KEGG" id="bps:BPSL2514"/>
<dbReference type="PATRIC" id="fig|272560.51.peg.2867"/>
<dbReference type="eggNOG" id="COG0776">
    <property type="taxonomic scope" value="Bacteria"/>
</dbReference>
<dbReference type="Proteomes" id="UP000000605">
    <property type="component" value="Chromosome 1"/>
</dbReference>
<dbReference type="GO" id="GO:0005694">
    <property type="term" value="C:chromosome"/>
    <property type="evidence" value="ECO:0007669"/>
    <property type="project" value="InterPro"/>
</dbReference>
<dbReference type="GO" id="GO:0005829">
    <property type="term" value="C:cytosol"/>
    <property type="evidence" value="ECO:0007669"/>
    <property type="project" value="TreeGrafter"/>
</dbReference>
<dbReference type="GO" id="GO:0003677">
    <property type="term" value="F:DNA binding"/>
    <property type="evidence" value="ECO:0007669"/>
    <property type="project" value="UniProtKB-UniRule"/>
</dbReference>
<dbReference type="GO" id="GO:0030527">
    <property type="term" value="F:structural constituent of chromatin"/>
    <property type="evidence" value="ECO:0007669"/>
    <property type="project" value="InterPro"/>
</dbReference>
<dbReference type="GO" id="GO:0006310">
    <property type="term" value="P:DNA recombination"/>
    <property type="evidence" value="ECO:0007669"/>
    <property type="project" value="UniProtKB-UniRule"/>
</dbReference>
<dbReference type="GO" id="GO:0006355">
    <property type="term" value="P:regulation of DNA-templated transcription"/>
    <property type="evidence" value="ECO:0007669"/>
    <property type="project" value="UniProtKB-UniRule"/>
</dbReference>
<dbReference type="GO" id="GO:0006417">
    <property type="term" value="P:regulation of translation"/>
    <property type="evidence" value="ECO:0007669"/>
    <property type="project" value="UniProtKB-UniRule"/>
</dbReference>
<dbReference type="CDD" id="cd13836">
    <property type="entry name" value="IHF_B"/>
    <property type="match status" value="1"/>
</dbReference>
<dbReference type="Gene3D" id="4.10.520.10">
    <property type="entry name" value="IHF-like DNA-binding proteins"/>
    <property type="match status" value="1"/>
</dbReference>
<dbReference type="HAMAP" id="MF_00381">
    <property type="entry name" value="IHF_beta"/>
    <property type="match status" value="1"/>
</dbReference>
<dbReference type="InterPro" id="IPR000119">
    <property type="entry name" value="Hist_DNA-bd"/>
</dbReference>
<dbReference type="InterPro" id="IPR010992">
    <property type="entry name" value="IHF-like_DNA-bd_dom_sf"/>
</dbReference>
<dbReference type="InterPro" id="IPR005685">
    <property type="entry name" value="IHF_beta"/>
</dbReference>
<dbReference type="NCBIfam" id="TIGR00988">
    <property type="entry name" value="hip"/>
    <property type="match status" value="1"/>
</dbReference>
<dbReference type="NCBIfam" id="NF001222">
    <property type="entry name" value="PRK00199.1"/>
    <property type="match status" value="1"/>
</dbReference>
<dbReference type="PANTHER" id="PTHR33175">
    <property type="entry name" value="DNA-BINDING PROTEIN HU"/>
    <property type="match status" value="1"/>
</dbReference>
<dbReference type="PANTHER" id="PTHR33175:SF5">
    <property type="entry name" value="INTEGRATION HOST FACTOR SUBUNIT BETA"/>
    <property type="match status" value="1"/>
</dbReference>
<dbReference type="Pfam" id="PF00216">
    <property type="entry name" value="Bac_DNA_binding"/>
    <property type="match status" value="1"/>
</dbReference>
<dbReference type="PRINTS" id="PR01727">
    <property type="entry name" value="DNABINDINGHU"/>
</dbReference>
<dbReference type="SMART" id="SM00411">
    <property type="entry name" value="BHL"/>
    <property type="match status" value="1"/>
</dbReference>
<dbReference type="SUPFAM" id="SSF47729">
    <property type="entry name" value="IHF-like DNA-binding proteins"/>
    <property type="match status" value="1"/>
</dbReference>
<name>IHFB_BURPS</name>
<feature type="chain" id="PRO_1000122203" description="Integration host factor subunit beta">
    <location>
        <begin position="1"/>
        <end position="107"/>
    </location>
</feature>
<feature type="region of interest" description="Disordered" evidence="2">
    <location>
        <begin position="55"/>
        <end position="107"/>
    </location>
</feature>
<feature type="compositionally biased region" description="Basic and acidic residues" evidence="2">
    <location>
        <begin position="65"/>
        <end position="101"/>
    </location>
</feature>
<gene>
    <name evidence="1" type="primary">ihfB</name>
    <name evidence="1" type="synonym">himD</name>
    <name type="ordered locus">BPSL2514</name>
</gene>
<proteinExistence type="inferred from homology"/>
<reference key="1">
    <citation type="journal article" date="2004" name="Proc. Natl. Acad. Sci. U.S.A.">
        <title>Genomic plasticity of the causative agent of melioidosis, Burkholderia pseudomallei.</title>
        <authorList>
            <person name="Holden M.T.G."/>
            <person name="Titball R.W."/>
            <person name="Peacock S.J."/>
            <person name="Cerdeno-Tarraga A.-M."/>
            <person name="Atkins T."/>
            <person name="Crossman L.C."/>
            <person name="Pitt T."/>
            <person name="Churcher C."/>
            <person name="Mungall K.L."/>
            <person name="Bentley S.D."/>
            <person name="Sebaihia M."/>
            <person name="Thomson N.R."/>
            <person name="Bason N."/>
            <person name="Beacham I.R."/>
            <person name="Brooks K."/>
            <person name="Brown K.A."/>
            <person name="Brown N.F."/>
            <person name="Challis G.L."/>
            <person name="Cherevach I."/>
            <person name="Chillingworth T."/>
            <person name="Cronin A."/>
            <person name="Crossett B."/>
            <person name="Davis P."/>
            <person name="DeShazer D."/>
            <person name="Feltwell T."/>
            <person name="Fraser A."/>
            <person name="Hance Z."/>
            <person name="Hauser H."/>
            <person name="Holroyd S."/>
            <person name="Jagels K."/>
            <person name="Keith K.E."/>
            <person name="Maddison M."/>
            <person name="Moule S."/>
            <person name="Price C."/>
            <person name="Quail M.A."/>
            <person name="Rabbinowitsch E."/>
            <person name="Rutherford K."/>
            <person name="Sanders M."/>
            <person name="Simmonds M."/>
            <person name="Songsivilai S."/>
            <person name="Stevens K."/>
            <person name="Tumapa S."/>
            <person name="Vesaratchavest M."/>
            <person name="Whitehead S."/>
            <person name="Yeats C."/>
            <person name="Barrell B.G."/>
            <person name="Oyston P.C.F."/>
            <person name="Parkhill J."/>
        </authorList>
    </citation>
    <scope>NUCLEOTIDE SEQUENCE [LARGE SCALE GENOMIC DNA]</scope>
    <source>
        <strain>K96243</strain>
    </source>
</reference>
<comment type="function">
    <text evidence="1">This protein is one of the two subunits of integration host factor, a specific DNA-binding protein that functions in genetic recombination as well as in transcriptional and translational control.</text>
</comment>
<comment type="subunit">
    <text evidence="1">Heterodimer of an alpha and a beta chain.</text>
</comment>
<comment type="similarity">
    <text evidence="1">Belongs to the bacterial histone-like protein family.</text>
</comment>
<accession>Q63S07</accession>